<accession>A8HVS0</accession>
<keyword id="KW-0067">ATP-binding</keyword>
<keyword id="KW-0963">Cytoplasm</keyword>
<keyword id="KW-1015">Disulfide bond</keyword>
<keyword id="KW-0547">Nucleotide-binding</keyword>
<keyword id="KW-1185">Reference proteome</keyword>
<keyword id="KW-0694">RNA-binding</keyword>
<keyword id="KW-0808">Transferase</keyword>
<keyword id="KW-0819">tRNA processing</keyword>
<keyword id="KW-0820">tRNA-binding</keyword>
<evidence type="ECO:0000255" key="1">
    <source>
        <dbReference type="HAMAP-Rule" id="MF_00144"/>
    </source>
</evidence>
<reference key="1">
    <citation type="submission" date="2007-04" db="EMBL/GenBank/DDBJ databases">
        <title>Complete genome sequence of the nitrogen-fixing bacterium Azorhizobium caulinodans ORS571.</title>
        <authorList>
            <person name="Lee K.B."/>
            <person name="Backer P.D."/>
            <person name="Aono T."/>
            <person name="Liu C.T."/>
            <person name="Suzuki S."/>
            <person name="Suzuki T."/>
            <person name="Kaneko T."/>
            <person name="Yamada M."/>
            <person name="Tabata S."/>
            <person name="Kupfer D.M."/>
            <person name="Najar F.Z."/>
            <person name="Wiley G.B."/>
            <person name="Roe B."/>
            <person name="Binnewies T."/>
            <person name="Ussery D."/>
            <person name="Vereecke D."/>
            <person name="Gevers D."/>
            <person name="Holsters M."/>
            <person name="Oyaizu H."/>
        </authorList>
    </citation>
    <scope>NUCLEOTIDE SEQUENCE [LARGE SCALE GENOMIC DNA]</scope>
    <source>
        <strain>ATCC 43989 / DSM 5975 / JCM 20966 / LMG 6465 / NBRC 14845 / NCIMB 13405 / ORS 571</strain>
    </source>
</reference>
<proteinExistence type="inferred from homology"/>
<gene>
    <name evidence="1" type="primary">mnmA</name>
    <name type="synonym">trmU</name>
    <name type="ordered locus">AZC_4350</name>
</gene>
<sequence>MLPDLTDIGTDPASTRVVVAMSGGVDSSVVAGLLARAGFDVVGVTLQLYDQGEAARRKGACCAGQDIYDARDVADRLGIPHYVLDYESRFREEVIERFADSYAAGFTPIPCVDCNRTVKFRDLLATAEDLGASVLATGHYVASRALPDGRRGLFRAAEENRDQSYFLYATTQAQATKLRFPLGGMRKSDVRALAAELGLPVADKPDSQDICFVPGGDYAEVVERLRPEAGEAGDIVHLDGRVLGRHRGVMHYTIGQRKGLGISTPEPLYVVAIDAARREVRVGPREALAVRSIGLTDINWLGDVPLLDACAAEQDIYVKVRSTRPPTPARLLRDADGAPTVELLAGEEGVAPGQACVFYDAASGAARLLGGGTIVRAERAGRHLAAAQVA</sequence>
<organism>
    <name type="scientific">Azorhizobium caulinodans (strain ATCC 43989 / DSM 5975 / JCM 20966 / LMG 6465 / NBRC 14845 / NCIMB 13405 / ORS 571)</name>
    <dbReference type="NCBI Taxonomy" id="438753"/>
    <lineage>
        <taxon>Bacteria</taxon>
        <taxon>Pseudomonadati</taxon>
        <taxon>Pseudomonadota</taxon>
        <taxon>Alphaproteobacteria</taxon>
        <taxon>Hyphomicrobiales</taxon>
        <taxon>Xanthobacteraceae</taxon>
        <taxon>Azorhizobium</taxon>
    </lineage>
</organism>
<protein>
    <recommendedName>
        <fullName evidence="1">tRNA-specific 2-thiouridylase MnmA</fullName>
        <ecNumber evidence="1">2.8.1.13</ecNumber>
    </recommendedName>
</protein>
<comment type="function">
    <text evidence="1">Catalyzes the 2-thiolation of uridine at the wobble position (U34) of tRNA, leading to the formation of s(2)U34.</text>
</comment>
<comment type="catalytic activity">
    <reaction evidence="1">
        <text>S-sulfanyl-L-cysteinyl-[protein] + uridine(34) in tRNA + AH2 + ATP = 2-thiouridine(34) in tRNA + L-cysteinyl-[protein] + A + AMP + diphosphate + H(+)</text>
        <dbReference type="Rhea" id="RHEA:47032"/>
        <dbReference type="Rhea" id="RHEA-COMP:10131"/>
        <dbReference type="Rhea" id="RHEA-COMP:11726"/>
        <dbReference type="Rhea" id="RHEA-COMP:11727"/>
        <dbReference type="Rhea" id="RHEA-COMP:11728"/>
        <dbReference type="ChEBI" id="CHEBI:13193"/>
        <dbReference type="ChEBI" id="CHEBI:15378"/>
        <dbReference type="ChEBI" id="CHEBI:17499"/>
        <dbReference type="ChEBI" id="CHEBI:29950"/>
        <dbReference type="ChEBI" id="CHEBI:30616"/>
        <dbReference type="ChEBI" id="CHEBI:33019"/>
        <dbReference type="ChEBI" id="CHEBI:61963"/>
        <dbReference type="ChEBI" id="CHEBI:65315"/>
        <dbReference type="ChEBI" id="CHEBI:87170"/>
        <dbReference type="ChEBI" id="CHEBI:456215"/>
        <dbReference type="EC" id="2.8.1.13"/>
    </reaction>
</comment>
<comment type="subcellular location">
    <subcellularLocation>
        <location evidence="1">Cytoplasm</location>
    </subcellularLocation>
</comment>
<comment type="similarity">
    <text evidence="1">Belongs to the MnmA/TRMU family.</text>
</comment>
<feature type="chain" id="PRO_1000071465" description="tRNA-specific 2-thiouridylase MnmA">
    <location>
        <begin position="1"/>
        <end position="390"/>
    </location>
</feature>
<feature type="region of interest" description="Interaction with tRNA" evidence="1">
    <location>
        <begin position="161"/>
        <end position="163"/>
    </location>
</feature>
<feature type="active site" description="Nucleophile" evidence="1">
    <location>
        <position position="114"/>
    </location>
</feature>
<feature type="active site" description="Cysteine persulfide intermediate" evidence="1">
    <location>
        <position position="211"/>
    </location>
</feature>
<feature type="binding site" evidence="1">
    <location>
        <begin position="20"/>
        <end position="27"/>
    </location>
    <ligand>
        <name>ATP</name>
        <dbReference type="ChEBI" id="CHEBI:30616"/>
    </ligand>
</feature>
<feature type="binding site" evidence="1">
    <location>
        <position position="46"/>
    </location>
    <ligand>
        <name>ATP</name>
        <dbReference type="ChEBI" id="CHEBI:30616"/>
    </ligand>
</feature>
<feature type="binding site" evidence="1">
    <location>
        <position position="138"/>
    </location>
    <ligand>
        <name>ATP</name>
        <dbReference type="ChEBI" id="CHEBI:30616"/>
    </ligand>
</feature>
<feature type="site" description="Interaction with tRNA" evidence="1">
    <location>
        <position position="139"/>
    </location>
</feature>
<feature type="site" description="Interaction with tRNA" evidence="1">
    <location>
        <position position="354"/>
    </location>
</feature>
<feature type="disulfide bond" description="Alternate" evidence="1">
    <location>
        <begin position="114"/>
        <end position="211"/>
    </location>
</feature>
<name>MNMA_AZOC5</name>
<dbReference type="EC" id="2.8.1.13" evidence="1"/>
<dbReference type="EMBL" id="AP009384">
    <property type="protein sequence ID" value="BAF90348.1"/>
    <property type="molecule type" value="Genomic_DNA"/>
</dbReference>
<dbReference type="SMR" id="A8HVS0"/>
<dbReference type="STRING" id="438753.AZC_4350"/>
<dbReference type="KEGG" id="azc:AZC_4350"/>
<dbReference type="eggNOG" id="COG0482">
    <property type="taxonomic scope" value="Bacteria"/>
</dbReference>
<dbReference type="HOGENOM" id="CLU_035188_0_1_5"/>
<dbReference type="Proteomes" id="UP000000270">
    <property type="component" value="Chromosome"/>
</dbReference>
<dbReference type="GO" id="GO:0005737">
    <property type="term" value="C:cytoplasm"/>
    <property type="evidence" value="ECO:0007669"/>
    <property type="project" value="UniProtKB-SubCell"/>
</dbReference>
<dbReference type="GO" id="GO:0005524">
    <property type="term" value="F:ATP binding"/>
    <property type="evidence" value="ECO:0007669"/>
    <property type="project" value="UniProtKB-KW"/>
</dbReference>
<dbReference type="GO" id="GO:0000049">
    <property type="term" value="F:tRNA binding"/>
    <property type="evidence" value="ECO:0007669"/>
    <property type="project" value="UniProtKB-KW"/>
</dbReference>
<dbReference type="GO" id="GO:0103016">
    <property type="term" value="F:tRNA-uridine 2-sulfurtransferase activity"/>
    <property type="evidence" value="ECO:0007669"/>
    <property type="project" value="UniProtKB-EC"/>
</dbReference>
<dbReference type="GO" id="GO:0002143">
    <property type="term" value="P:tRNA wobble position uridine thiolation"/>
    <property type="evidence" value="ECO:0007669"/>
    <property type="project" value="TreeGrafter"/>
</dbReference>
<dbReference type="CDD" id="cd01998">
    <property type="entry name" value="MnmA_TRMU-like"/>
    <property type="match status" value="1"/>
</dbReference>
<dbReference type="FunFam" id="2.30.30.280:FF:000001">
    <property type="entry name" value="tRNA-specific 2-thiouridylase MnmA"/>
    <property type="match status" value="1"/>
</dbReference>
<dbReference type="FunFam" id="3.40.50.620:FF:000115">
    <property type="entry name" value="tRNA-specific 2-thiouridylase MnmA"/>
    <property type="match status" value="1"/>
</dbReference>
<dbReference type="Gene3D" id="2.30.30.280">
    <property type="entry name" value="Adenine nucleotide alpha hydrolases-like domains"/>
    <property type="match status" value="1"/>
</dbReference>
<dbReference type="Gene3D" id="3.40.50.620">
    <property type="entry name" value="HUPs"/>
    <property type="match status" value="1"/>
</dbReference>
<dbReference type="Gene3D" id="2.40.30.10">
    <property type="entry name" value="Translation factors"/>
    <property type="match status" value="1"/>
</dbReference>
<dbReference type="HAMAP" id="MF_00144">
    <property type="entry name" value="tRNA_thiouridyl_MnmA"/>
    <property type="match status" value="1"/>
</dbReference>
<dbReference type="InterPro" id="IPR004506">
    <property type="entry name" value="MnmA-like"/>
</dbReference>
<dbReference type="InterPro" id="IPR046885">
    <property type="entry name" value="MnmA-like_C"/>
</dbReference>
<dbReference type="InterPro" id="IPR046884">
    <property type="entry name" value="MnmA-like_central"/>
</dbReference>
<dbReference type="InterPro" id="IPR023382">
    <property type="entry name" value="MnmA-like_central_sf"/>
</dbReference>
<dbReference type="InterPro" id="IPR014729">
    <property type="entry name" value="Rossmann-like_a/b/a_fold"/>
</dbReference>
<dbReference type="NCBIfam" id="NF001138">
    <property type="entry name" value="PRK00143.1"/>
    <property type="match status" value="1"/>
</dbReference>
<dbReference type="NCBIfam" id="TIGR00420">
    <property type="entry name" value="trmU"/>
    <property type="match status" value="1"/>
</dbReference>
<dbReference type="PANTHER" id="PTHR11933:SF5">
    <property type="entry name" value="MITOCHONDRIAL TRNA-SPECIFIC 2-THIOURIDYLASE 1"/>
    <property type="match status" value="1"/>
</dbReference>
<dbReference type="PANTHER" id="PTHR11933">
    <property type="entry name" value="TRNA 5-METHYLAMINOMETHYL-2-THIOURIDYLATE -METHYLTRANSFERASE"/>
    <property type="match status" value="1"/>
</dbReference>
<dbReference type="Pfam" id="PF03054">
    <property type="entry name" value="tRNA_Me_trans"/>
    <property type="match status" value="1"/>
</dbReference>
<dbReference type="Pfam" id="PF20258">
    <property type="entry name" value="tRNA_Me_trans_C"/>
    <property type="match status" value="1"/>
</dbReference>
<dbReference type="Pfam" id="PF20259">
    <property type="entry name" value="tRNA_Me_trans_M"/>
    <property type="match status" value="1"/>
</dbReference>
<dbReference type="SUPFAM" id="SSF52402">
    <property type="entry name" value="Adenine nucleotide alpha hydrolases-like"/>
    <property type="match status" value="1"/>
</dbReference>